<name>SG1D1_HUMAN</name>
<gene>
    <name type="primary">SCGB1D1</name>
    <name type="synonym">LIPHA</name>
    <name type="synonym">LPNA</name>
</gene>
<reference key="1">
    <citation type="journal article" date="1999" name="Biochem. Biophys. Res. Commun.">
        <title>Lipophilins: human peptides homologous to rat prostatein.</title>
        <authorList>
            <person name="Zhao C."/>
            <person name="Nguyen T."/>
            <person name="Yusifov T."/>
            <person name="Glasgow B.J."/>
            <person name="Lehrer R.I."/>
        </authorList>
    </citation>
    <scope>NUCLEOTIDE SEQUENCE [MRNA]</scope>
</reference>
<reference key="2">
    <citation type="journal article" date="2004" name="Genome Res.">
        <title>The status, quality, and expansion of the NIH full-length cDNA project: the Mammalian Gene Collection (MGC).</title>
        <authorList>
            <consortium name="The MGC Project Team"/>
        </authorList>
    </citation>
    <scope>NUCLEOTIDE SEQUENCE [LARGE SCALE MRNA]</scope>
    <source>
        <tissue>Thyroid</tissue>
    </source>
</reference>
<reference key="3">
    <citation type="journal article" date="1998" name="FEBS Lett.">
        <title>Lipophilin, a novel heterodimeric protein of human tears.</title>
        <authorList>
            <person name="Lehrer R.I."/>
            <person name="Xu G."/>
            <person name="Abduragimov A."/>
            <person name="Dinh N.N."/>
            <person name="Qu X.-D."/>
            <person name="Martin D."/>
            <person name="Glasgow B.J."/>
        </authorList>
    </citation>
    <scope>PROTEIN SEQUENCE OF 22-90</scope>
    <scope>MASS SPECTROMETRY</scope>
</reference>
<reference key="4">
    <citation type="journal article" date="2015" name="J. Proteome Res.">
        <title>Human basal tear peptidome characterization by CID, HCD, and ETD followed by in silico and in vitro analyses for antimicrobial peptide identification.</title>
        <authorList>
            <person name="Azkargorta M."/>
            <person name="Soria J."/>
            <person name="Ojeda C."/>
            <person name="Guzman F."/>
            <person name="Acera A."/>
            <person name="Iloro I."/>
            <person name="Suarez T."/>
            <person name="Elortza F."/>
        </authorList>
    </citation>
    <scope>PROTEIN SEQUENCE OF 22-90</scope>
    <scope>IDENTIFICATION BY MASS SPECTROMETRY</scope>
    <source>
        <tissue>Tear</tissue>
    </source>
</reference>
<proteinExistence type="evidence at protein level"/>
<comment type="function">
    <text>May bind androgens and other steroids, may also bind estramustine, a chemotherapeutic agent used for prostate cancer. May be under transcriptional regulation of steroid hormones.</text>
</comment>
<comment type="subunit">
    <text>Heterodimer of a lipophilin A and a lipophilin C (mammaglobin B) monomer associated head to head.</text>
</comment>
<comment type="interaction">
    <interactant intactId="EBI-12825395">
        <id>O95968</id>
    </interactant>
    <interactant intactId="EBI-17447707">
        <id>Q9H9P2</id>
        <label>CHODL</label>
    </interactant>
    <organismsDiffer>false</organismsDiffer>
    <experiments>3</experiments>
</comment>
<comment type="interaction">
    <interactant intactId="EBI-12825395">
        <id>O95968</id>
    </interactant>
    <interactant intactId="EBI-6942903">
        <id>Q96BA8</id>
        <label>CREB3L1</label>
    </interactant>
    <organismsDiffer>false</organismsDiffer>
    <experiments>3</experiments>
</comment>
<comment type="interaction">
    <interactant intactId="EBI-12825395">
        <id>O95968</id>
    </interactant>
    <interactant intactId="EBI-18304435">
        <id>Q5JX71</id>
        <label>FAM209A</label>
    </interactant>
    <organismsDiffer>false</organismsDiffer>
    <experiments>3</experiments>
</comment>
<comment type="interaction">
    <interactant intactId="EBI-12825395">
        <id>O95968</id>
    </interactant>
    <interactant intactId="EBI-2833872">
        <id>O15552</id>
        <label>FFAR2</label>
    </interactant>
    <organismsDiffer>false</organismsDiffer>
    <experiments>3</experiments>
</comment>
<comment type="interaction">
    <interactant intactId="EBI-12825395">
        <id>O95968</id>
    </interactant>
    <interactant intactId="EBI-12807478">
        <id>P35372-10</id>
        <label>OPRM1</label>
    </interactant>
    <organismsDiffer>false</organismsDiffer>
    <experiments>3</experiments>
</comment>
<comment type="interaction">
    <interactant intactId="EBI-12825395">
        <id>O95968</id>
    </interactant>
    <interactant intactId="EBI-9978441">
        <id>Q9H2H9</id>
        <label>SLC38A1</label>
    </interactant>
    <organismsDiffer>false</organismsDiffer>
    <experiments>3</experiments>
</comment>
<comment type="subcellular location">
    <subcellularLocation>
        <location evidence="3">Secreted</location>
    </subcellularLocation>
</comment>
<comment type="tissue specificity">
    <text>Expressed in lachrymal gland, thymus, kidney, testis, ovary and salivary gland.</text>
</comment>
<comment type="mass spectrometry" mass="7574.69" method="Electrospray" evidence="2"/>
<comment type="similarity">
    <text evidence="3">Belongs to the secretoglobin family. Lipophilin subfamily.</text>
</comment>
<dbReference type="EMBL" id="AJ224171">
    <property type="protein sequence ID" value="CAA11863.1"/>
    <property type="molecule type" value="mRNA"/>
</dbReference>
<dbReference type="EMBL" id="BC069170">
    <property type="protein sequence ID" value="AAH69170.1"/>
    <property type="molecule type" value="mRNA"/>
</dbReference>
<dbReference type="EMBL" id="BC062693">
    <property type="protein sequence ID" value="AAH62693.1"/>
    <property type="molecule type" value="mRNA"/>
</dbReference>
<dbReference type="EMBL" id="BC069289">
    <property type="protein sequence ID" value="AAH69289.1"/>
    <property type="molecule type" value="mRNA"/>
</dbReference>
<dbReference type="CCDS" id="CCDS8015.1"/>
<dbReference type="RefSeq" id="NP_006543.1">
    <property type="nucleotide sequence ID" value="NM_006552.2"/>
</dbReference>
<dbReference type="SMR" id="O95968"/>
<dbReference type="BioGRID" id="115892">
    <property type="interactions" value="147"/>
</dbReference>
<dbReference type="FunCoup" id="O95968">
    <property type="interactions" value="206"/>
</dbReference>
<dbReference type="IntAct" id="O95968">
    <property type="interactions" value="131"/>
</dbReference>
<dbReference type="STRING" id="9606.ENSP00000303070"/>
<dbReference type="iPTMnet" id="O95968"/>
<dbReference type="PhosphoSitePlus" id="O95968"/>
<dbReference type="BioMuta" id="SCGB1D1"/>
<dbReference type="MassIVE" id="O95968"/>
<dbReference type="PaxDb" id="9606-ENSP00000303070"/>
<dbReference type="PeptideAtlas" id="O95968"/>
<dbReference type="ProteomicsDB" id="51149"/>
<dbReference type="Pumba" id="O95968"/>
<dbReference type="Antibodypedia" id="82583">
    <property type="antibodies" value="1 antibodies from 1 providers"/>
</dbReference>
<dbReference type="DNASU" id="10648"/>
<dbReference type="Ensembl" id="ENST00000306238.3">
    <property type="protein sequence ID" value="ENSP00000303070.3"/>
    <property type="gene ID" value="ENSG00000168515.3"/>
</dbReference>
<dbReference type="GeneID" id="10648"/>
<dbReference type="KEGG" id="hsa:10648"/>
<dbReference type="MANE-Select" id="ENST00000306238.3">
    <property type="protein sequence ID" value="ENSP00000303070.3"/>
    <property type="RefSeq nucleotide sequence ID" value="NM_006552.2"/>
    <property type="RefSeq protein sequence ID" value="NP_006543.1"/>
</dbReference>
<dbReference type="UCSC" id="uc001nsz.2">
    <property type="organism name" value="human"/>
</dbReference>
<dbReference type="AGR" id="HGNC:18395"/>
<dbReference type="CTD" id="10648"/>
<dbReference type="DisGeNET" id="10648"/>
<dbReference type="GeneCards" id="SCGB1D1"/>
<dbReference type="HGNC" id="HGNC:18395">
    <property type="gene designation" value="SCGB1D1"/>
</dbReference>
<dbReference type="HPA" id="ENSG00000168515">
    <property type="expression patterns" value="Tissue enhanced (cervix)"/>
</dbReference>
<dbReference type="MIM" id="615060">
    <property type="type" value="gene"/>
</dbReference>
<dbReference type="neXtProt" id="NX_O95968"/>
<dbReference type="OpenTargets" id="ENSG00000168515"/>
<dbReference type="PharmGKB" id="PA34990"/>
<dbReference type="VEuPathDB" id="HostDB:ENSG00000168515"/>
<dbReference type="eggNOG" id="ENOG502SXZG">
    <property type="taxonomic scope" value="Eukaryota"/>
</dbReference>
<dbReference type="GeneTree" id="ENSGT00530000063866"/>
<dbReference type="HOGENOM" id="CLU_166234_0_0_1"/>
<dbReference type="InParanoid" id="O95968"/>
<dbReference type="OMA" id="DMMAYEK"/>
<dbReference type="OrthoDB" id="9535440at2759"/>
<dbReference type="PAN-GO" id="O95968">
    <property type="GO annotations" value="1 GO annotation based on evolutionary models"/>
</dbReference>
<dbReference type="PhylomeDB" id="O95968"/>
<dbReference type="TreeFam" id="TF338526"/>
<dbReference type="PathwayCommons" id="O95968"/>
<dbReference type="SignaLink" id="O95968"/>
<dbReference type="BioGRID-ORCS" id="10648">
    <property type="hits" value="17 hits in 1132 CRISPR screens"/>
</dbReference>
<dbReference type="GenomeRNAi" id="10648"/>
<dbReference type="Pharos" id="O95968">
    <property type="development level" value="Tbio"/>
</dbReference>
<dbReference type="PRO" id="PR:O95968"/>
<dbReference type="Proteomes" id="UP000005640">
    <property type="component" value="Chromosome 11"/>
</dbReference>
<dbReference type="RNAct" id="O95968">
    <property type="molecule type" value="protein"/>
</dbReference>
<dbReference type="Bgee" id="ENSG00000168515">
    <property type="expression patterns" value="Expressed in right uterine tube and 30 other cell types or tissues"/>
</dbReference>
<dbReference type="GO" id="GO:0005615">
    <property type="term" value="C:extracellular space"/>
    <property type="evidence" value="ECO:0000314"/>
    <property type="project" value="UniProtKB"/>
</dbReference>
<dbReference type="CDD" id="cd00633">
    <property type="entry name" value="Secretoglobin"/>
    <property type="match status" value="1"/>
</dbReference>
<dbReference type="InterPro" id="IPR016126">
    <property type="entry name" value="Secretoglobin"/>
</dbReference>
<dbReference type="InterPro" id="IPR035960">
    <property type="entry name" value="Secretoglobin_sf"/>
</dbReference>
<dbReference type="PANTHER" id="PTHR11332">
    <property type="entry name" value="SECRETOGLOBIN FAMILY 1D"/>
    <property type="match status" value="1"/>
</dbReference>
<dbReference type="PANTHER" id="PTHR11332:SF5">
    <property type="entry name" value="SECRETOGLOBIN FAMILY 1D MEMBER 1"/>
    <property type="match status" value="1"/>
</dbReference>
<dbReference type="Pfam" id="PF01099">
    <property type="entry name" value="Uteroglobin"/>
    <property type="match status" value="1"/>
</dbReference>
<dbReference type="SUPFAM" id="SSF48201">
    <property type="entry name" value="Uteroglobin-like"/>
    <property type="match status" value="1"/>
</dbReference>
<dbReference type="PROSITE" id="PS51311">
    <property type="entry name" value="SCGB"/>
    <property type="match status" value="1"/>
</dbReference>
<sequence length="90" mass="9898">MRLSVCLLLLTLALCCYRANAVVCQALGSEITGFLLAGKPVFKFQLAKFKAPLEAVAAKMEVKKCVDTMAYEKRVLITKTLGKIAEKCDR</sequence>
<feature type="signal peptide" evidence="1 2">
    <location>
        <begin position="1"/>
        <end position="21"/>
    </location>
</feature>
<feature type="chain" id="PRO_0000036378" description="Secretoglobin family 1D member 1">
    <location>
        <begin position="22"/>
        <end position="90"/>
    </location>
</feature>
<protein>
    <recommendedName>
        <fullName>Secretoglobin family 1D member 1</fullName>
    </recommendedName>
    <alternativeName>
        <fullName>Lipophilin-A</fullName>
    </alternativeName>
</protein>
<accession>O95968</accession>
<organism>
    <name type="scientific">Homo sapiens</name>
    <name type="common">Human</name>
    <dbReference type="NCBI Taxonomy" id="9606"/>
    <lineage>
        <taxon>Eukaryota</taxon>
        <taxon>Metazoa</taxon>
        <taxon>Chordata</taxon>
        <taxon>Craniata</taxon>
        <taxon>Vertebrata</taxon>
        <taxon>Euteleostomi</taxon>
        <taxon>Mammalia</taxon>
        <taxon>Eutheria</taxon>
        <taxon>Euarchontoglires</taxon>
        <taxon>Primates</taxon>
        <taxon>Haplorrhini</taxon>
        <taxon>Catarrhini</taxon>
        <taxon>Hominidae</taxon>
        <taxon>Homo</taxon>
    </lineage>
</organism>
<keyword id="KW-0903">Direct protein sequencing</keyword>
<keyword id="KW-1267">Proteomics identification</keyword>
<keyword id="KW-1185">Reference proteome</keyword>
<keyword id="KW-0964">Secreted</keyword>
<keyword id="KW-0732">Signal</keyword>
<evidence type="ECO:0000269" key="1">
    <source>
    </source>
</evidence>
<evidence type="ECO:0000269" key="2">
    <source>
    </source>
</evidence>
<evidence type="ECO:0000305" key="3"/>